<evidence type="ECO:0000255" key="1"/>
<evidence type="ECO:0000305" key="2"/>
<evidence type="ECO:0007829" key="3">
    <source>
        <dbReference type="PDB" id="5I5H"/>
    </source>
</evidence>
<evidence type="ECO:0007829" key="4">
    <source>
        <dbReference type="PDB" id="6XLP"/>
    </source>
</evidence>
<organism>
    <name type="scientific">Escherichia coli (strain K12)</name>
    <dbReference type="NCBI Taxonomy" id="83333"/>
    <lineage>
        <taxon>Bacteria</taxon>
        <taxon>Pseudomonadati</taxon>
        <taxon>Pseudomonadota</taxon>
        <taxon>Gammaproteobacteria</taxon>
        <taxon>Enterobacterales</taxon>
        <taxon>Enterobacteriaceae</taxon>
        <taxon>Escherichia</taxon>
    </lineage>
</organism>
<keyword id="KW-0002">3D-structure</keyword>
<keyword id="KW-0997">Cell inner membrane</keyword>
<keyword id="KW-1003">Cell membrane</keyword>
<keyword id="KW-0472">Membrane</keyword>
<keyword id="KW-1185">Reference proteome</keyword>
<keyword id="KW-0812">Transmembrane</keyword>
<keyword id="KW-1133">Transmembrane helix</keyword>
<gene>
    <name type="primary">yejM</name>
    <name type="synonym">yejN</name>
    <name type="ordered locus">b2188</name>
    <name type="ordered locus">JW2176</name>
</gene>
<dbReference type="EMBL" id="U00008">
    <property type="protein sequence ID" value="AAA16384.1"/>
    <property type="molecule type" value="Genomic_DNA"/>
</dbReference>
<dbReference type="EMBL" id="U00096">
    <property type="protein sequence ID" value="AAC75249.1"/>
    <property type="molecule type" value="Genomic_DNA"/>
</dbReference>
<dbReference type="EMBL" id="AP009048">
    <property type="protein sequence ID" value="BAE76653.1"/>
    <property type="molecule type" value="Genomic_DNA"/>
</dbReference>
<dbReference type="PIR" id="C64988">
    <property type="entry name" value="C64988"/>
</dbReference>
<dbReference type="RefSeq" id="NP_416693.1">
    <property type="nucleotide sequence ID" value="NC_000913.3"/>
</dbReference>
<dbReference type="RefSeq" id="WP_000256203.1">
    <property type="nucleotide sequence ID" value="NZ_STEB01000002.1"/>
</dbReference>
<dbReference type="PDB" id="5I5H">
    <property type="method" value="X-ray"/>
    <property type="resolution" value="1.65 A"/>
    <property type="chains" value="A=1-586"/>
</dbReference>
<dbReference type="PDB" id="6XLP">
    <property type="method" value="X-ray"/>
    <property type="resolution" value="2.00 A"/>
    <property type="chains" value="A=1-586"/>
</dbReference>
<dbReference type="PDB" id="7T6D">
    <property type="method" value="EM"/>
    <property type="resolution" value="3.90 A"/>
    <property type="chains" value="C/D=1-586"/>
</dbReference>
<dbReference type="PDBsum" id="5I5H"/>
<dbReference type="PDBsum" id="6XLP"/>
<dbReference type="PDBsum" id="7T6D"/>
<dbReference type="SMR" id="P0AD27"/>
<dbReference type="BioGRID" id="4260478">
    <property type="interactions" value="16"/>
</dbReference>
<dbReference type="FunCoup" id="P0AD27">
    <property type="interactions" value="93"/>
</dbReference>
<dbReference type="STRING" id="511145.b2188"/>
<dbReference type="TCDB" id="2.A.127.1.2">
    <property type="family name" value="the enterobacterial cardiolipin transporter (clt) family"/>
</dbReference>
<dbReference type="jPOST" id="P0AD27"/>
<dbReference type="PaxDb" id="511145-b2188"/>
<dbReference type="EnsemblBacteria" id="AAC75249">
    <property type="protein sequence ID" value="AAC75249"/>
    <property type="gene ID" value="b2188"/>
</dbReference>
<dbReference type="GeneID" id="75172317"/>
<dbReference type="GeneID" id="946685"/>
<dbReference type="KEGG" id="ecj:JW2176"/>
<dbReference type="KEGG" id="eco:b2188"/>
<dbReference type="KEGG" id="ecoc:C3026_12235"/>
<dbReference type="PATRIC" id="fig|1411691.4.peg.47"/>
<dbReference type="EchoBASE" id="EB1981"/>
<dbReference type="eggNOG" id="COG3083">
    <property type="taxonomic scope" value="Bacteria"/>
</dbReference>
<dbReference type="HOGENOM" id="CLU_030247_1_0_6"/>
<dbReference type="InParanoid" id="P0AD27"/>
<dbReference type="OMA" id="QMLFSRW"/>
<dbReference type="OrthoDB" id="236686at2"/>
<dbReference type="PhylomeDB" id="P0AD27"/>
<dbReference type="BioCyc" id="EcoCyc:EG12049-MONOMER"/>
<dbReference type="PRO" id="PR:P0AD27"/>
<dbReference type="Proteomes" id="UP000000625">
    <property type="component" value="Chromosome"/>
</dbReference>
<dbReference type="GO" id="GO:0005886">
    <property type="term" value="C:plasma membrane"/>
    <property type="evidence" value="ECO:0000314"/>
    <property type="project" value="EcoCyc"/>
</dbReference>
<dbReference type="DisProt" id="DP02484"/>
<dbReference type="FunFam" id="3.40.720.10:FF:000014">
    <property type="entry name" value="Hydrolase, inner membrane"/>
    <property type="match status" value="1"/>
</dbReference>
<dbReference type="Gene3D" id="3.40.720.10">
    <property type="entry name" value="Alkaline Phosphatase, subunit A"/>
    <property type="match status" value="1"/>
</dbReference>
<dbReference type="InterPro" id="IPR017850">
    <property type="entry name" value="Alkaline_phosphatase_core_sf"/>
</dbReference>
<dbReference type="InterPro" id="IPR000917">
    <property type="entry name" value="Sulfatase_N"/>
</dbReference>
<dbReference type="InterPro" id="IPR012159">
    <property type="entry name" value="YejM-like"/>
</dbReference>
<dbReference type="InterPro" id="IPR047997">
    <property type="entry name" value="YejM_enterobact"/>
</dbReference>
<dbReference type="InterPro" id="IPR024588">
    <property type="entry name" value="YejM_N"/>
</dbReference>
<dbReference type="NCBIfam" id="NF038282">
    <property type="entry name" value="LapC_YejM_PbgA"/>
    <property type="match status" value="1"/>
</dbReference>
<dbReference type="PANTHER" id="PTHR43108:SF10">
    <property type="entry name" value="INNER MEMBRANE PROTEIN YEJM"/>
    <property type="match status" value="1"/>
</dbReference>
<dbReference type="PANTHER" id="PTHR43108">
    <property type="entry name" value="N-ACETYLGLUCOSAMINE-6-SULFATASE FAMILY MEMBER"/>
    <property type="match status" value="1"/>
</dbReference>
<dbReference type="Pfam" id="PF11893">
    <property type="entry name" value="DUF3413"/>
    <property type="match status" value="1"/>
</dbReference>
<dbReference type="Pfam" id="PF00884">
    <property type="entry name" value="Sulfatase"/>
    <property type="match status" value="1"/>
</dbReference>
<dbReference type="PIRSF" id="PIRSF004950">
    <property type="entry name" value="Mmb_sulf_HI0842"/>
    <property type="match status" value="1"/>
</dbReference>
<dbReference type="SUPFAM" id="SSF53649">
    <property type="entry name" value="Alkaline phosphatase-like"/>
    <property type="match status" value="1"/>
</dbReference>
<comment type="subcellular location">
    <subcellularLocation>
        <location>Cell inner membrane</location>
        <topology>Multi-pass membrane protein</topology>
    </subcellularLocation>
</comment>
<comment type="similarity">
    <text evidence="2">To H.influenzae HI_0842.</text>
</comment>
<protein>
    <recommendedName>
        <fullName>Inner membrane protein YejM</fullName>
    </recommendedName>
</protein>
<sequence length="586" mass="67296">MVTHRQRYREKVSQMVSWGHWFALFNILLSLVIGSRYLFIADWPTTLAGRIYSYVSIIGHFSFLVFATYLLILFPLTFIVGSQRLMRFLSVILATAGMTLLLIDSEVFTRFHLHLNPIVWQLVINPDENEMARDWQLMFISVPVILLLELVFATWSWQKLRSLTRRRRFARPLAAFLFIAFIASHVVYIWADANFYRPITMQRANLPLSYPMTARRFLEKHGLLDAQEYQRRLIEQGNPDAVSVQYPLSELRYRDMGTGQNVLLITVDGLNYSRFEKQMPALAGFAEQNISFTRHMSSGNTTDNGIFGLFYGISPSYMDGILSTRTPAALITALNQQGYQLGLFSSDGFTSPLYRQALLSDFSMPSVRTQSDEQTATQWINWLGRYAQEDNRWFSWVSFNGTNIDDSNQQAFARKYSRAAGNVDDQINRVLNALRDSGKLDNTVVIITAGRGIPLSEEEETFDWSHGHLQVPLVIHWPGTPAQRINALTDHTDLMTTLMQRLLHVSTPASEYSQGQDLFNPQRRHYWVTAADNDTLAITTPKKTLVLNNNGKYRTYNLRGERVKDEKPQLSLLLQVLTDEKRFIAN</sequence>
<accession>P0AD27</accession>
<accession>P33922</accession>
<accession>P33923</accession>
<accession>Q2MAQ3</accession>
<proteinExistence type="evidence at protein level"/>
<name>YEJM_ECOLI</name>
<feature type="chain" id="PRO_0000169165" description="Inner membrane protein YejM">
    <location>
        <begin position="1"/>
        <end position="586"/>
    </location>
</feature>
<feature type="topological domain" description="Cytoplasmic" evidence="1">
    <location>
        <begin position="1"/>
        <end position="20"/>
    </location>
</feature>
<feature type="transmembrane region" description="Helical" evidence="1">
    <location>
        <begin position="21"/>
        <end position="43"/>
    </location>
</feature>
<feature type="topological domain" description="Periplasmic" evidence="1">
    <location>
        <begin position="44"/>
        <end position="57"/>
    </location>
</feature>
<feature type="transmembrane region" description="Helical" evidence="1">
    <location>
        <begin position="58"/>
        <end position="80"/>
    </location>
</feature>
<feature type="topological domain" description="Cytoplasmic" evidence="1">
    <location>
        <begin position="81"/>
        <end position="84"/>
    </location>
</feature>
<feature type="transmembrane region" description="Helical" evidence="1">
    <location>
        <begin position="85"/>
        <end position="103"/>
    </location>
</feature>
<feature type="topological domain" description="Periplasmic" evidence="1">
    <location>
        <begin position="104"/>
        <end position="134"/>
    </location>
</feature>
<feature type="transmembrane region" description="Helical" evidence="1">
    <location>
        <begin position="135"/>
        <end position="157"/>
    </location>
</feature>
<feature type="topological domain" description="Cytoplasmic" evidence="1">
    <location>
        <begin position="158"/>
        <end position="168"/>
    </location>
</feature>
<feature type="transmembrane region" description="Helical" evidence="1">
    <location>
        <begin position="169"/>
        <end position="191"/>
    </location>
</feature>
<feature type="topological domain" description="Periplasmic" evidence="1">
    <location>
        <begin position="192"/>
        <end position="586"/>
    </location>
</feature>
<feature type="helix" evidence="4">
    <location>
        <begin position="4"/>
        <end position="40"/>
    </location>
</feature>
<feature type="helix" evidence="4">
    <location>
        <begin position="47"/>
        <end position="71"/>
    </location>
</feature>
<feature type="helix" evidence="4">
    <location>
        <begin position="73"/>
        <end position="77"/>
    </location>
</feature>
<feature type="helix" evidence="4">
    <location>
        <begin position="83"/>
        <end position="111"/>
    </location>
</feature>
<feature type="helix" evidence="4">
    <location>
        <begin position="117"/>
        <end position="123"/>
    </location>
</feature>
<feature type="helix" evidence="4">
    <location>
        <begin position="128"/>
        <end position="139"/>
    </location>
</feature>
<feature type="helix" evidence="4">
    <location>
        <begin position="141"/>
        <end position="158"/>
    </location>
</feature>
<feature type="helix" evidence="4">
    <location>
        <begin position="160"/>
        <end position="165"/>
    </location>
</feature>
<feature type="helix" evidence="4">
    <location>
        <begin position="167"/>
        <end position="169"/>
    </location>
</feature>
<feature type="helix" evidence="4">
    <location>
        <begin position="171"/>
        <end position="193"/>
    </location>
</feature>
<feature type="helix" evidence="4">
    <location>
        <begin position="197"/>
        <end position="200"/>
    </location>
</feature>
<feature type="turn" evidence="4">
    <location>
        <begin position="201"/>
        <end position="204"/>
    </location>
</feature>
<feature type="helix" evidence="4">
    <location>
        <begin position="215"/>
        <end position="220"/>
    </location>
</feature>
<feature type="helix" evidence="4">
    <location>
        <begin position="226"/>
        <end position="236"/>
    </location>
</feature>
<feature type="strand" evidence="4">
    <location>
        <begin position="247"/>
        <end position="249"/>
    </location>
</feature>
<feature type="strand" evidence="3">
    <location>
        <begin position="253"/>
        <end position="256"/>
    </location>
</feature>
<feature type="strand" evidence="3">
    <location>
        <begin position="262"/>
        <end position="270"/>
    </location>
</feature>
<feature type="helix" evidence="3">
    <location>
        <begin position="275"/>
        <end position="278"/>
    </location>
</feature>
<feature type="helix" evidence="3">
    <location>
        <begin position="280"/>
        <end position="287"/>
    </location>
</feature>
<feature type="strand" evidence="3">
    <location>
        <begin position="289"/>
        <end position="296"/>
    </location>
</feature>
<feature type="helix" evidence="3">
    <location>
        <begin position="302"/>
        <end position="311"/>
    </location>
</feature>
<feature type="helix" evidence="3">
    <location>
        <begin position="315"/>
        <end position="317"/>
    </location>
</feature>
<feature type="helix" evidence="3">
    <location>
        <begin position="318"/>
        <end position="323"/>
    </location>
</feature>
<feature type="helix" evidence="3">
    <location>
        <begin position="329"/>
        <end position="336"/>
    </location>
</feature>
<feature type="strand" evidence="3">
    <location>
        <begin position="340"/>
        <end position="347"/>
    </location>
</feature>
<feature type="helix" evidence="4">
    <location>
        <begin position="348"/>
        <end position="350"/>
    </location>
</feature>
<feature type="helix" evidence="3">
    <location>
        <begin position="352"/>
        <end position="356"/>
    </location>
</feature>
<feature type="helix" evidence="3">
    <location>
        <begin position="358"/>
        <end position="361"/>
    </location>
</feature>
<feature type="strand" evidence="3">
    <location>
        <begin position="366"/>
        <end position="368"/>
    </location>
</feature>
<feature type="helix" evidence="3">
    <location>
        <begin position="372"/>
        <end position="385"/>
    </location>
</feature>
<feature type="helix" evidence="3">
    <location>
        <begin position="387"/>
        <end position="389"/>
    </location>
</feature>
<feature type="strand" evidence="3">
    <location>
        <begin position="391"/>
        <end position="399"/>
    </location>
</feature>
<feature type="helix" evidence="3">
    <location>
        <begin position="409"/>
        <end position="436"/>
    </location>
</feature>
<feature type="helix" evidence="4">
    <location>
        <begin position="440"/>
        <end position="442"/>
    </location>
</feature>
<feature type="strand" evidence="3">
    <location>
        <begin position="443"/>
        <end position="452"/>
    </location>
</feature>
<feature type="helix" evidence="3">
    <location>
        <begin position="457"/>
        <end position="460"/>
    </location>
</feature>
<feature type="helix" evidence="3">
    <location>
        <begin position="466"/>
        <end position="469"/>
    </location>
</feature>
<feature type="strand" evidence="3">
    <location>
        <begin position="473"/>
        <end position="476"/>
    </location>
</feature>
<feature type="strand" evidence="3">
    <location>
        <begin position="483"/>
        <end position="485"/>
    </location>
</feature>
<feature type="helix" evidence="3">
    <location>
        <begin position="491"/>
        <end position="501"/>
    </location>
</feature>
<feature type="helix" evidence="3">
    <location>
        <begin position="509"/>
        <end position="511"/>
    </location>
</feature>
<feature type="strand" evidence="3">
    <location>
        <begin position="528"/>
        <end position="531"/>
    </location>
</feature>
<feature type="strand" evidence="3">
    <location>
        <begin position="533"/>
        <end position="539"/>
    </location>
</feature>
<feature type="strand" evidence="3">
    <location>
        <begin position="541"/>
        <end position="548"/>
    </location>
</feature>
<feature type="strand" evidence="3">
    <location>
        <begin position="553"/>
        <end position="557"/>
    </location>
</feature>
<feature type="helix" evidence="4">
    <location>
        <begin position="570"/>
        <end position="579"/>
    </location>
</feature>
<feature type="turn" evidence="4">
    <location>
        <begin position="580"/>
        <end position="583"/>
    </location>
</feature>
<reference key="1">
    <citation type="submission" date="1993-10" db="EMBL/GenBank/DDBJ databases">
        <title>Automated multiplex sequencing of the E.coli genome.</title>
        <authorList>
            <person name="Richterich P."/>
            <person name="Lakey N."/>
            <person name="Gryan G."/>
            <person name="Jaehn L."/>
            <person name="Mintz L."/>
            <person name="Robison K."/>
            <person name="Church G.M."/>
        </authorList>
    </citation>
    <scope>NUCLEOTIDE SEQUENCE [LARGE SCALE GENOMIC DNA]</scope>
    <source>
        <strain>K12 / BHB2600</strain>
    </source>
</reference>
<reference key="2">
    <citation type="submission" date="1994-02" db="EMBL/GenBank/DDBJ databases">
        <authorList>
            <person name="Robison K."/>
        </authorList>
    </citation>
    <scope>SEQUENCE REVISION</scope>
</reference>
<reference key="3">
    <citation type="journal article" date="1997" name="Science">
        <title>The complete genome sequence of Escherichia coli K-12.</title>
        <authorList>
            <person name="Blattner F.R."/>
            <person name="Plunkett G. III"/>
            <person name="Bloch C.A."/>
            <person name="Perna N.T."/>
            <person name="Burland V."/>
            <person name="Riley M."/>
            <person name="Collado-Vides J."/>
            <person name="Glasner J.D."/>
            <person name="Rode C.K."/>
            <person name="Mayhew G.F."/>
            <person name="Gregor J."/>
            <person name="Davis N.W."/>
            <person name="Kirkpatrick H.A."/>
            <person name="Goeden M.A."/>
            <person name="Rose D.J."/>
            <person name="Mau B."/>
            <person name="Shao Y."/>
        </authorList>
    </citation>
    <scope>NUCLEOTIDE SEQUENCE [LARGE SCALE GENOMIC DNA]</scope>
    <source>
        <strain>K12 / MG1655 / ATCC 47076</strain>
    </source>
</reference>
<reference key="4">
    <citation type="journal article" date="2006" name="Mol. Syst. Biol.">
        <title>Highly accurate genome sequences of Escherichia coli K-12 strains MG1655 and W3110.</title>
        <authorList>
            <person name="Hayashi K."/>
            <person name="Morooka N."/>
            <person name="Yamamoto Y."/>
            <person name="Fujita K."/>
            <person name="Isono K."/>
            <person name="Choi S."/>
            <person name="Ohtsubo E."/>
            <person name="Baba T."/>
            <person name="Wanner B.L."/>
            <person name="Mori H."/>
            <person name="Horiuchi T."/>
        </authorList>
    </citation>
    <scope>NUCLEOTIDE SEQUENCE [LARGE SCALE GENOMIC DNA]</scope>
    <source>
        <strain>K12 / W3110 / ATCC 27325 / DSM 5911</strain>
    </source>
</reference>
<reference key="5">
    <citation type="journal article" date="2005" name="Science">
        <title>Global topology analysis of the Escherichia coli inner membrane proteome.</title>
        <authorList>
            <person name="Daley D.O."/>
            <person name="Rapp M."/>
            <person name="Granseth E."/>
            <person name="Melen K."/>
            <person name="Drew D."/>
            <person name="von Heijne G."/>
        </authorList>
    </citation>
    <scope>TOPOLOGY [LARGE SCALE ANALYSIS]</scope>
    <source>
        <strain>K12 / MG1655 / ATCC 47076</strain>
    </source>
</reference>